<proteinExistence type="evidence at protein level"/>
<comment type="function">
    <text evidence="2 3">Nitrilase that hydrolyzes preferentially phenylacetonitrile, (R,S)-mandelonitrile, and 3-indolylacetonitrile.</text>
</comment>
<comment type="catalytic activity">
    <reaction evidence="2 3">
        <text>a nitrile + 2 H2O = a carboxylate + NH4(+)</text>
        <dbReference type="Rhea" id="RHEA:21724"/>
        <dbReference type="ChEBI" id="CHEBI:15377"/>
        <dbReference type="ChEBI" id="CHEBI:18379"/>
        <dbReference type="ChEBI" id="CHEBI:28938"/>
        <dbReference type="ChEBI" id="CHEBI:29067"/>
        <dbReference type="EC" id="3.5.5.1"/>
    </reaction>
</comment>
<comment type="catalytic activity">
    <reaction evidence="2 3">
        <text>4-chlorophenylacetonitrile + 2 H2O = 4-chlorophenylacetate + NH4(+)</text>
        <dbReference type="Rhea" id="RHEA:20657"/>
        <dbReference type="ChEBI" id="CHEBI:15377"/>
        <dbReference type="ChEBI" id="CHEBI:16237"/>
        <dbReference type="ChEBI" id="CHEBI:17346"/>
        <dbReference type="ChEBI" id="CHEBI:28938"/>
        <dbReference type="EC" id="3.5.5.5"/>
    </reaction>
</comment>
<comment type="biophysicochemical properties">
    <kinetics>
        <KM evidence="3">1.4 mM for phenylacetonitrile</KM>
        <KM evidence="3">4 mM for (R,S)-mandelonitrile</KM>
        <Vmax evidence="3">25.7 umol/min/mg enzyme toward phenylacetonitrile</Vmax>
        <Vmax evidence="3">20.5 umol/min/mg enzyme toward (R,S)-mandelonitrile</Vmax>
    </kinetics>
    <phDependence>
        <text evidence="3">Optimum pH is 5.0-10.5.</text>
    </phDependence>
    <temperatureDependence>
        <text evidence="3">Optimum temperature is 45-50 degrees Celsius.</text>
    </temperatureDependence>
</comment>
<comment type="similarity">
    <text evidence="6">Belongs to the carbon-nitrogen hydrolase superfamily. Nitrilase family.</text>
</comment>
<protein>
    <recommendedName>
        <fullName evidence="4 5">Arylacetonitrilase</fullName>
        <ecNumber evidence="2 3">3.5.5.1</ecNumber>
        <ecNumber evidence="2 3">3.5.5.5</ecNumber>
    </recommendedName>
    <alternativeName>
        <fullName evidence="4">NitAb</fullName>
    </alternativeName>
</protein>
<name>NIT_ARTBC</name>
<evidence type="ECO:0000255" key="1">
    <source>
        <dbReference type="PROSITE-ProRule" id="PRU00054"/>
    </source>
</evidence>
<evidence type="ECO:0000269" key="2">
    <source>
    </source>
</evidence>
<evidence type="ECO:0000269" key="3">
    <source ref="2"/>
</evidence>
<evidence type="ECO:0000303" key="4">
    <source>
    </source>
</evidence>
<evidence type="ECO:0000303" key="5">
    <source ref="2"/>
</evidence>
<evidence type="ECO:0000305" key="6"/>
<keyword id="KW-0378">Hydrolase</keyword>
<keyword id="KW-1185">Reference proteome</keyword>
<gene>
    <name type="ORF">ARB_02388</name>
</gene>
<accession>D4B1Q8</accession>
<sequence length="335" mass="36085">MSGPALKVAITQAQPKWLDLAGSVEKTVNLIAEAAKGDARLVAFPECWIPGYPGWIWQRPVDPIINTKYIQNSLSVNSAEMNTIKSAAKENNIAVVLGFVEAIDTHSVYIAQAIISPKGELLMHRRKIKPTHMERTVFGDGSGSDLTNVADVDFGGDIGVVKVGTLACWEHALPLLKYHTYSQKEAIHIAMWPPIDPHPGVDAPALWSMSAEGCQNLSQTHAIEGGAYVLHCTAVCNEEGIEGMKTKGGLLFQEPGGGHSAAIAPDGRRLTKPLADGNPAAEGIVYADLDMARVVMNKGFIDVVGHYSRPDLLWLGVDKAQKGCVVPKREPEQDV</sequence>
<organism>
    <name type="scientific">Arthroderma benhamiae (strain ATCC MYA-4681 / CBS 112371)</name>
    <name type="common">Trichophyton mentagrophytes</name>
    <dbReference type="NCBI Taxonomy" id="663331"/>
    <lineage>
        <taxon>Eukaryota</taxon>
        <taxon>Fungi</taxon>
        <taxon>Dikarya</taxon>
        <taxon>Ascomycota</taxon>
        <taxon>Pezizomycotina</taxon>
        <taxon>Eurotiomycetes</taxon>
        <taxon>Eurotiomycetidae</taxon>
        <taxon>Onygenales</taxon>
        <taxon>Arthrodermataceae</taxon>
        <taxon>Trichophyton</taxon>
    </lineage>
</organism>
<dbReference type="EC" id="3.5.5.1" evidence="2 3"/>
<dbReference type="EC" id="3.5.5.5" evidence="2 3"/>
<dbReference type="EMBL" id="ABSU01000027">
    <property type="protein sequence ID" value="EFE30690.1"/>
    <property type="molecule type" value="Genomic_DNA"/>
</dbReference>
<dbReference type="RefSeq" id="XP_003011330.1">
    <property type="nucleotide sequence ID" value="XM_003011284.1"/>
</dbReference>
<dbReference type="SMR" id="D4B1Q8"/>
<dbReference type="STRING" id="663331.D4B1Q8"/>
<dbReference type="GeneID" id="9524231"/>
<dbReference type="KEGG" id="abe:ARB_02388"/>
<dbReference type="eggNOG" id="KOG0805">
    <property type="taxonomic scope" value="Eukaryota"/>
</dbReference>
<dbReference type="HOGENOM" id="CLU_030130_6_0_1"/>
<dbReference type="OMA" id="LHCTAVC"/>
<dbReference type="OrthoDB" id="10250282at2759"/>
<dbReference type="Proteomes" id="UP000008866">
    <property type="component" value="Unassembled WGS sequence"/>
</dbReference>
<dbReference type="GO" id="GO:0047428">
    <property type="term" value="F:arylacetonitrilase activity"/>
    <property type="evidence" value="ECO:0007669"/>
    <property type="project" value="UniProtKB-EC"/>
</dbReference>
<dbReference type="CDD" id="cd07564">
    <property type="entry name" value="nitrilases_CHs"/>
    <property type="match status" value="1"/>
</dbReference>
<dbReference type="FunFam" id="3.60.110.10:FF:000011">
    <property type="entry name" value="Cyanide hydratase"/>
    <property type="match status" value="1"/>
</dbReference>
<dbReference type="Gene3D" id="3.60.110.10">
    <property type="entry name" value="Carbon-nitrogen hydrolase"/>
    <property type="match status" value="1"/>
</dbReference>
<dbReference type="InterPro" id="IPR003010">
    <property type="entry name" value="C-N_Hydrolase"/>
</dbReference>
<dbReference type="InterPro" id="IPR036526">
    <property type="entry name" value="C-N_Hydrolase_sf"/>
</dbReference>
<dbReference type="InterPro" id="IPR044149">
    <property type="entry name" value="Nitrilases_CHs"/>
</dbReference>
<dbReference type="PANTHER" id="PTHR46044:SF14">
    <property type="entry name" value="ARYLACETONITRILASE"/>
    <property type="match status" value="1"/>
</dbReference>
<dbReference type="PANTHER" id="PTHR46044">
    <property type="entry name" value="NITRILASE"/>
    <property type="match status" value="1"/>
</dbReference>
<dbReference type="Pfam" id="PF00795">
    <property type="entry name" value="CN_hydrolase"/>
    <property type="match status" value="1"/>
</dbReference>
<dbReference type="SUPFAM" id="SSF56317">
    <property type="entry name" value="Carbon-nitrogen hydrolase"/>
    <property type="match status" value="1"/>
</dbReference>
<dbReference type="PROSITE" id="PS50263">
    <property type="entry name" value="CN_HYDROLASE"/>
    <property type="match status" value="1"/>
</dbReference>
<feature type="chain" id="PRO_0000432171" description="Arylacetonitrilase">
    <location>
        <begin position="1"/>
        <end position="335"/>
    </location>
</feature>
<feature type="domain" description="CN hydrolase" evidence="1">
    <location>
        <begin position="6"/>
        <end position="291"/>
    </location>
</feature>
<feature type="active site" description="Proton acceptor" evidence="1">
    <location>
        <position position="46"/>
    </location>
</feature>
<feature type="active site" evidence="1">
    <location>
        <position position="127"/>
    </location>
</feature>
<feature type="active site" description="Nucleophile" evidence="1">
    <location>
        <position position="168"/>
    </location>
</feature>
<reference key="1">
    <citation type="journal article" date="2011" name="Genome Biol.">
        <title>Comparative and functional genomics provide insights into the pathogenicity of dermatophytic fungi.</title>
        <authorList>
            <person name="Burmester A."/>
            <person name="Shelest E."/>
            <person name="Gloeckner G."/>
            <person name="Heddergott C."/>
            <person name="Schindler S."/>
            <person name="Staib P."/>
            <person name="Heidel A."/>
            <person name="Felder M."/>
            <person name="Petzold A."/>
            <person name="Szafranski K."/>
            <person name="Feuermann M."/>
            <person name="Pedruzzi I."/>
            <person name="Priebe S."/>
            <person name="Groth M."/>
            <person name="Winkler R."/>
            <person name="Li W."/>
            <person name="Kniemeyer O."/>
            <person name="Schroeckh V."/>
            <person name="Hertweck C."/>
            <person name="Hube B."/>
            <person name="White T.C."/>
            <person name="Platzer M."/>
            <person name="Guthke R."/>
            <person name="Heitman J."/>
            <person name="Woestemeyer J."/>
            <person name="Zipfel P.F."/>
            <person name="Monod M."/>
            <person name="Brakhage A.A."/>
        </authorList>
    </citation>
    <scope>NUCLEOTIDE SEQUENCE [LARGE SCALE GENOMIC DNA]</scope>
    <source>
        <strain>ATCC MYA-4681 / CBS 112371</strain>
    </source>
</reference>
<reference key="2">
    <citation type="journal article" date="2013" name="Biocatal. Biotransformation">
        <title>Heterologous expression, purification and characterization of arylacetonitrilases from Nectria haematococca and Arthroderma benhamiae.</title>
        <authorList>
            <person name="Vesela A.B."/>
            <person name="Petrickova A."/>
            <person name="Weyrauch P."/>
            <person name="Martinkova L."/>
        </authorList>
    </citation>
    <scope>FUNCTION</scope>
    <scope>CATALYTIC ACTIVITY</scope>
    <scope>BIOPHYSICOCHEMICAL PROPERTIES</scope>
</reference>
<reference key="3">
    <citation type="journal article" date="2013" name="Mol. Biotechnol.">
        <title>A comparative study of nitrilases identified by genome mining.</title>
        <authorList>
            <person name="Kaplan O."/>
            <person name="Vesela A.B."/>
            <person name="Petrickova A."/>
            <person name="Pasquarelli F."/>
            <person name="Picmanova M."/>
            <person name="Rinagelova A."/>
            <person name="Bhalla T.C."/>
            <person name="Patek M."/>
            <person name="Martinkova L."/>
        </authorList>
    </citation>
    <scope>FUNCTION</scope>
    <scope>CATALYTIC ACTIVITY</scope>
</reference>